<name>FMT_MYCPN</name>
<dbReference type="EC" id="2.1.2.9" evidence="2"/>
<dbReference type="EMBL" id="U00089">
    <property type="protein sequence ID" value="AAB95947.1"/>
    <property type="molecule type" value="Genomic_DNA"/>
</dbReference>
<dbReference type="PIR" id="S73625">
    <property type="entry name" value="S73625"/>
</dbReference>
<dbReference type="RefSeq" id="NP_110232.1">
    <property type="nucleotide sequence ID" value="NC_000912.1"/>
</dbReference>
<dbReference type="RefSeq" id="WP_010874900.1">
    <property type="nucleotide sequence ID" value="NZ_OU342337.1"/>
</dbReference>
<dbReference type="SMR" id="P75235"/>
<dbReference type="STRING" id="272634.MPN_543"/>
<dbReference type="EnsemblBacteria" id="AAB95947">
    <property type="protein sequence ID" value="AAB95947"/>
    <property type="gene ID" value="MPN_543"/>
</dbReference>
<dbReference type="KEGG" id="mpn:MPN_543"/>
<dbReference type="PATRIC" id="fig|272634.6.peg.605"/>
<dbReference type="HOGENOM" id="CLU_033347_1_1_14"/>
<dbReference type="OrthoDB" id="9802815at2"/>
<dbReference type="BioCyc" id="MPNE272634:G1GJ3-893-MONOMER"/>
<dbReference type="Proteomes" id="UP000000808">
    <property type="component" value="Chromosome"/>
</dbReference>
<dbReference type="GO" id="GO:0005829">
    <property type="term" value="C:cytosol"/>
    <property type="evidence" value="ECO:0007669"/>
    <property type="project" value="TreeGrafter"/>
</dbReference>
<dbReference type="GO" id="GO:0004479">
    <property type="term" value="F:methionyl-tRNA formyltransferase activity"/>
    <property type="evidence" value="ECO:0007669"/>
    <property type="project" value="UniProtKB-EC"/>
</dbReference>
<dbReference type="CDD" id="cd08646">
    <property type="entry name" value="FMT_core_Met-tRNA-FMT_N"/>
    <property type="match status" value="1"/>
</dbReference>
<dbReference type="Gene3D" id="3.10.25.10">
    <property type="entry name" value="Formyl transferase, C-terminal domain"/>
    <property type="match status" value="1"/>
</dbReference>
<dbReference type="Gene3D" id="3.40.50.170">
    <property type="entry name" value="Formyl transferase, N-terminal domain"/>
    <property type="match status" value="1"/>
</dbReference>
<dbReference type="InterPro" id="IPR005794">
    <property type="entry name" value="Fmt"/>
</dbReference>
<dbReference type="InterPro" id="IPR005793">
    <property type="entry name" value="Formyl_trans_C"/>
</dbReference>
<dbReference type="InterPro" id="IPR037022">
    <property type="entry name" value="Formyl_trans_C_sf"/>
</dbReference>
<dbReference type="InterPro" id="IPR002376">
    <property type="entry name" value="Formyl_transf_N"/>
</dbReference>
<dbReference type="InterPro" id="IPR036477">
    <property type="entry name" value="Formyl_transf_N_sf"/>
</dbReference>
<dbReference type="InterPro" id="IPR011034">
    <property type="entry name" value="Formyl_transferase-like_C_sf"/>
</dbReference>
<dbReference type="InterPro" id="IPR041711">
    <property type="entry name" value="Met-tRNA-FMT_N"/>
</dbReference>
<dbReference type="NCBIfam" id="TIGR00460">
    <property type="entry name" value="fmt"/>
    <property type="match status" value="1"/>
</dbReference>
<dbReference type="PANTHER" id="PTHR11138">
    <property type="entry name" value="METHIONYL-TRNA FORMYLTRANSFERASE"/>
    <property type="match status" value="1"/>
</dbReference>
<dbReference type="PANTHER" id="PTHR11138:SF5">
    <property type="entry name" value="METHIONYL-TRNA FORMYLTRANSFERASE, MITOCHONDRIAL"/>
    <property type="match status" value="1"/>
</dbReference>
<dbReference type="Pfam" id="PF02911">
    <property type="entry name" value="Formyl_trans_C"/>
    <property type="match status" value="1"/>
</dbReference>
<dbReference type="Pfam" id="PF00551">
    <property type="entry name" value="Formyl_trans_N"/>
    <property type="match status" value="1"/>
</dbReference>
<dbReference type="SUPFAM" id="SSF50486">
    <property type="entry name" value="FMT C-terminal domain-like"/>
    <property type="match status" value="1"/>
</dbReference>
<dbReference type="SUPFAM" id="SSF53328">
    <property type="entry name" value="Formyltransferase"/>
    <property type="match status" value="1"/>
</dbReference>
<protein>
    <recommendedName>
        <fullName evidence="2">Methionyl-tRNA formyltransferase</fullName>
        <ecNumber evidence="2">2.1.2.9</ecNumber>
    </recommendedName>
</protein>
<proteinExistence type="inferred from homology"/>
<gene>
    <name type="primary">fmt</name>
    <name type="ordered locus">MPN_543</name>
    <name type="ORF">MP299</name>
</gene>
<sequence>MIKVVFFGTSTLSKCCLEAIFQDPEFVVCGVVTQPDKVNERNNKINFSAVKQFCIENNIPCFQPEKNIQIKTELAQLQADIGVCVAFGQYIHNDIINLFPYKIANLHPSKLPLLRGGAPLHWTIINGFTTSSLSVIELVQKMDAGPIWKQKDFKVNPNWNTGDLFEYVQTHAPQFLIQCLKEIVSGKSQWKEQINPPTFGLNIKKEQERLDLNLEPKAFINWVKGLAPKPGGWLEFEGQNIKILQATYLGKMTSTTAVGQITKISKQGIEIALANDEIVLLQIIQIPGKRAMGVSEIINGKHPFAEGKFFH</sequence>
<evidence type="ECO:0000250" key="1"/>
<evidence type="ECO:0000250" key="2">
    <source>
        <dbReference type="UniProtKB" id="P23882"/>
    </source>
</evidence>
<evidence type="ECO:0000305" key="3"/>
<comment type="function">
    <text evidence="2">Attaches a formyl group to the free amino group of methionyl-tRNA(fMet). The formyl group appears to play a dual role in the initiator identity of N-formylmethionyl-tRNA by promoting its recognition by IF2 and preventing the misappropriation of this tRNA by the elongation apparatus.</text>
</comment>
<comment type="catalytic activity">
    <reaction evidence="2">
        <text>L-methionyl-tRNA(fMet) + (6R)-10-formyltetrahydrofolate = N-formyl-L-methionyl-tRNA(fMet) + (6S)-5,6,7,8-tetrahydrofolate + H(+)</text>
        <dbReference type="Rhea" id="RHEA:24380"/>
        <dbReference type="Rhea" id="RHEA-COMP:9952"/>
        <dbReference type="Rhea" id="RHEA-COMP:9953"/>
        <dbReference type="ChEBI" id="CHEBI:15378"/>
        <dbReference type="ChEBI" id="CHEBI:57453"/>
        <dbReference type="ChEBI" id="CHEBI:78530"/>
        <dbReference type="ChEBI" id="CHEBI:78844"/>
        <dbReference type="ChEBI" id="CHEBI:195366"/>
        <dbReference type="EC" id="2.1.2.9"/>
    </reaction>
</comment>
<comment type="similarity">
    <text evidence="3">Belongs to the Fmt family.</text>
</comment>
<reference key="1">
    <citation type="journal article" date="1996" name="Nucleic Acids Res.">
        <title>Complete sequence analysis of the genome of the bacterium Mycoplasma pneumoniae.</title>
        <authorList>
            <person name="Himmelreich R."/>
            <person name="Hilbert H."/>
            <person name="Plagens H."/>
            <person name="Pirkl E."/>
            <person name="Li B.-C."/>
            <person name="Herrmann R."/>
        </authorList>
    </citation>
    <scope>NUCLEOTIDE SEQUENCE [LARGE SCALE GENOMIC DNA]</scope>
    <source>
        <strain>ATCC 29342 / M129 / Subtype 1</strain>
    </source>
</reference>
<keyword id="KW-0648">Protein biosynthesis</keyword>
<keyword id="KW-1185">Reference proteome</keyword>
<keyword id="KW-0808">Transferase</keyword>
<accession>P75235</accession>
<feature type="chain" id="PRO_0000082997" description="Methionyl-tRNA formyltransferase">
    <location>
        <begin position="1"/>
        <end position="311"/>
    </location>
</feature>
<feature type="binding site" evidence="1">
    <location>
        <begin position="109"/>
        <end position="112"/>
    </location>
    <ligand>
        <name>(6S)-5,6,7,8-tetrahydrofolate</name>
        <dbReference type="ChEBI" id="CHEBI:57453"/>
    </ligand>
</feature>
<organism>
    <name type="scientific">Mycoplasma pneumoniae (strain ATCC 29342 / M129 / Subtype 1)</name>
    <name type="common">Mycoplasmoides pneumoniae</name>
    <dbReference type="NCBI Taxonomy" id="272634"/>
    <lineage>
        <taxon>Bacteria</taxon>
        <taxon>Bacillati</taxon>
        <taxon>Mycoplasmatota</taxon>
        <taxon>Mycoplasmoidales</taxon>
        <taxon>Mycoplasmoidaceae</taxon>
        <taxon>Mycoplasmoides</taxon>
    </lineage>
</organism>